<accession>P0A0F6</accession>
<accession>O06445</accession>
<evidence type="ECO:0000255" key="1">
    <source>
        <dbReference type="HAMAP-Rule" id="MF_01341"/>
    </source>
</evidence>
<evidence type="ECO:0000256" key="2">
    <source>
        <dbReference type="SAM" id="MobiDB-lite"/>
    </source>
</evidence>
<evidence type="ECO:0000305" key="3"/>
<keyword id="KW-0687">Ribonucleoprotein</keyword>
<keyword id="KW-0689">Ribosomal protein</keyword>
<keyword id="KW-0694">RNA-binding</keyword>
<keyword id="KW-0699">rRNA-binding</keyword>
<reference key="1">
    <citation type="journal article" date="2001" name="Lancet">
        <title>Whole genome sequencing of meticillin-resistant Staphylococcus aureus.</title>
        <authorList>
            <person name="Kuroda M."/>
            <person name="Ohta T."/>
            <person name="Uchiyama I."/>
            <person name="Baba T."/>
            <person name="Yuzawa H."/>
            <person name="Kobayashi I."/>
            <person name="Cui L."/>
            <person name="Oguchi A."/>
            <person name="Aoki K."/>
            <person name="Nagai Y."/>
            <person name="Lian J.-Q."/>
            <person name="Ito T."/>
            <person name="Kanamori M."/>
            <person name="Matsumaru H."/>
            <person name="Maruyama A."/>
            <person name="Murakami H."/>
            <person name="Hosoyama A."/>
            <person name="Mizutani-Ui Y."/>
            <person name="Takahashi N.K."/>
            <person name="Sawano T."/>
            <person name="Inoue R."/>
            <person name="Kaito C."/>
            <person name="Sekimizu K."/>
            <person name="Hirakawa H."/>
            <person name="Kuhara S."/>
            <person name="Goto S."/>
            <person name="Yabuzaki J."/>
            <person name="Kanehisa M."/>
            <person name="Yamashita A."/>
            <person name="Oshima K."/>
            <person name="Furuya K."/>
            <person name="Yoshino C."/>
            <person name="Shiba T."/>
            <person name="Hattori M."/>
            <person name="Ogasawara N."/>
            <person name="Hayashi H."/>
            <person name="Hiramatsu K."/>
        </authorList>
    </citation>
    <scope>NUCLEOTIDE SEQUENCE [LARGE SCALE GENOMIC DNA]</scope>
    <source>
        <strain>N315</strain>
    </source>
</reference>
<reference key="2">
    <citation type="submission" date="2007-10" db="UniProtKB">
        <title>Shotgun proteomic analysis of total and membrane protein extracts of S. aureus strain N315.</title>
        <authorList>
            <person name="Vaezzadeh A.R."/>
            <person name="Deshusses J."/>
            <person name="Lescuyer P."/>
            <person name="Hochstrasser D.F."/>
        </authorList>
    </citation>
    <scope>IDENTIFICATION BY MASS SPECTROMETRY [LARGE SCALE ANALYSIS]</scope>
    <source>
        <strain>N315</strain>
    </source>
</reference>
<name>RL15_STAAN</name>
<proteinExistence type="evidence at protein level"/>
<feature type="chain" id="PRO_0000104813" description="Large ribosomal subunit protein uL15">
    <location>
        <begin position="1"/>
        <end position="146"/>
    </location>
</feature>
<feature type="region of interest" description="Disordered" evidence="2">
    <location>
        <begin position="1"/>
        <end position="54"/>
    </location>
</feature>
<feature type="compositionally biased region" description="Basic and acidic residues" evidence="2">
    <location>
        <begin position="1"/>
        <end position="18"/>
    </location>
</feature>
<feature type="compositionally biased region" description="Gly residues" evidence="2">
    <location>
        <begin position="42"/>
        <end position="52"/>
    </location>
</feature>
<sequence length="146" mass="15597">MKLHELKPAEGSRKERNRVGRGVATGNGKTSGRGHKGQKARSGGGVRPGFEGGQLPLFRRLPKRGFTNINRKEYAIVNLDQLNKFEDGTEVTPALLVESGVVKNEKSGIKILGNGSLDKKLTVKAHKFSASAAEAIDAKGGAHEVI</sequence>
<protein>
    <recommendedName>
        <fullName evidence="1">Large ribosomal subunit protein uL15</fullName>
    </recommendedName>
    <alternativeName>
        <fullName evidence="3">50S ribosomal protein L15</fullName>
    </alternativeName>
</protein>
<gene>
    <name evidence="1" type="primary">rplO</name>
    <name type="ordered locus">SA2029</name>
</gene>
<dbReference type="EMBL" id="BA000018">
    <property type="protein sequence ID" value="BAB43323.1"/>
    <property type="molecule type" value="Genomic_DNA"/>
</dbReference>
<dbReference type="PIR" id="B90020">
    <property type="entry name" value="B90020"/>
</dbReference>
<dbReference type="RefSeq" id="WP_000766074.1">
    <property type="nucleotide sequence ID" value="NC_002745.2"/>
</dbReference>
<dbReference type="SMR" id="P0A0F6"/>
<dbReference type="EnsemblBacteria" id="BAB43323">
    <property type="protein sequence ID" value="BAB43323"/>
    <property type="gene ID" value="BAB43323"/>
</dbReference>
<dbReference type="GeneID" id="98346543"/>
<dbReference type="KEGG" id="sau:SA2029"/>
<dbReference type="HOGENOM" id="CLU_055188_4_2_9"/>
<dbReference type="GO" id="GO:0022625">
    <property type="term" value="C:cytosolic large ribosomal subunit"/>
    <property type="evidence" value="ECO:0007669"/>
    <property type="project" value="TreeGrafter"/>
</dbReference>
<dbReference type="GO" id="GO:0019843">
    <property type="term" value="F:rRNA binding"/>
    <property type="evidence" value="ECO:0007669"/>
    <property type="project" value="UniProtKB-UniRule"/>
</dbReference>
<dbReference type="GO" id="GO:0003735">
    <property type="term" value="F:structural constituent of ribosome"/>
    <property type="evidence" value="ECO:0007669"/>
    <property type="project" value="InterPro"/>
</dbReference>
<dbReference type="GO" id="GO:0006412">
    <property type="term" value="P:translation"/>
    <property type="evidence" value="ECO:0007669"/>
    <property type="project" value="UniProtKB-UniRule"/>
</dbReference>
<dbReference type="FunFam" id="3.100.10.10:FF:000004">
    <property type="entry name" value="50S ribosomal protein L15"/>
    <property type="match status" value="1"/>
</dbReference>
<dbReference type="Gene3D" id="3.100.10.10">
    <property type="match status" value="1"/>
</dbReference>
<dbReference type="HAMAP" id="MF_01341">
    <property type="entry name" value="Ribosomal_uL15"/>
    <property type="match status" value="1"/>
</dbReference>
<dbReference type="InterPro" id="IPR030878">
    <property type="entry name" value="Ribosomal_uL15"/>
</dbReference>
<dbReference type="InterPro" id="IPR021131">
    <property type="entry name" value="Ribosomal_uL15/eL18"/>
</dbReference>
<dbReference type="InterPro" id="IPR036227">
    <property type="entry name" value="Ribosomal_uL15/eL18_sf"/>
</dbReference>
<dbReference type="InterPro" id="IPR005749">
    <property type="entry name" value="Ribosomal_uL15_bac-type"/>
</dbReference>
<dbReference type="InterPro" id="IPR001196">
    <property type="entry name" value="Ribosomal_uL15_CS"/>
</dbReference>
<dbReference type="NCBIfam" id="TIGR01071">
    <property type="entry name" value="rplO_bact"/>
    <property type="match status" value="1"/>
</dbReference>
<dbReference type="PANTHER" id="PTHR12934">
    <property type="entry name" value="50S RIBOSOMAL PROTEIN L15"/>
    <property type="match status" value="1"/>
</dbReference>
<dbReference type="PANTHER" id="PTHR12934:SF11">
    <property type="entry name" value="LARGE RIBOSOMAL SUBUNIT PROTEIN UL15M"/>
    <property type="match status" value="1"/>
</dbReference>
<dbReference type="Pfam" id="PF00828">
    <property type="entry name" value="Ribosomal_L27A"/>
    <property type="match status" value="1"/>
</dbReference>
<dbReference type="SUPFAM" id="SSF52080">
    <property type="entry name" value="Ribosomal proteins L15p and L18e"/>
    <property type="match status" value="1"/>
</dbReference>
<dbReference type="PROSITE" id="PS00475">
    <property type="entry name" value="RIBOSOMAL_L15"/>
    <property type="match status" value="1"/>
</dbReference>
<organism>
    <name type="scientific">Staphylococcus aureus (strain N315)</name>
    <dbReference type="NCBI Taxonomy" id="158879"/>
    <lineage>
        <taxon>Bacteria</taxon>
        <taxon>Bacillati</taxon>
        <taxon>Bacillota</taxon>
        <taxon>Bacilli</taxon>
        <taxon>Bacillales</taxon>
        <taxon>Staphylococcaceae</taxon>
        <taxon>Staphylococcus</taxon>
    </lineage>
</organism>
<comment type="function">
    <text evidence="1">Binds to the 23S rRNA.</text>
</comment>
<comment type="subunit">
    <text evidence="1">Part of the 50S ribosomal subunit.</text>
</comment>
<comment type="similarity">
    <text evidence="1">Belongs to the universal ribosomal protein uL15 family.</text>
</comment>